<keyword id="KW-0002">3D-structure</keyword>
<keyword id="KW-0732">Signal</keyword>
<accession>P0DSN3</accession>
<protein>
    <recommendedName>
        <fullName evidence="2">Multiheme cytochrome MtrA</fullName>
    </recommendedName>
</protein>
<dbReference type="EMBL" id="CP000753">
    <property type="protein sequence ID" value="ABS07724.1"/>
    <property type="molecule type" value="Genomic_DNA"/>
</dbReference>
<dbReference type="RefSeq" id="WP_006081107.1">
    <property type="nucleotide sequence ID" value="NC_009665.1"/>
</dbReference>
<dbReference type="PDB" id="6R2Q">
    <property type="method" value="X-ray"/>
    <property type="resolution" value="2.70 A"/>
    <property type="chains" value="A=1-333"/>
</dbReference>
<dbReference type="PDBsum" id="6R2Q"/>
<dbReference type="SMR" id="P0DSN3"/>
<dbReference type="GeneID" id="11771845"/>
<dbReference type="KEGG" id="sbm:Shew185_1577"/>
<dbReference type="GO" id="GO:0016491">
    <property type="term" value="F:oxidoreductase activity"/>
    <property type="evidence" value="ECO:0007669"/>
    <property type="project" value="TreeGrafter"/>
</dbReference>
<dbReference type="Gene3D" id="1.10.1130.10">
    <property type="entry name" value="Flavocytochrome C3, Chain A"/>
    <property type="match status" value="3"/>
</dbReference>
<dbReference type="InterPro" id="IPR053875">
    <property type="entry name" value="Cytochrom_c_NrfB-like_dom"/>
</dbReference>
<dbReference type="InterPro" id="IPR020015">
    <property type="entry name" value="Decahaem_cyt-c_DmsE"/>
</dbReference>
<dbReference type="InterPro" id="IPR036280">
    <property type="entry name" value="Multihaem_cyt_sf"/>
</dbReference>
<dbReference type="InterPro" id="IPR051829">
    <property type="entry name" value="Multiheme_Cytochr_ET"/>
</dbReference>
<dbReference type="InterPro" id="IPR010177">
    <property type="entry name" value="Paired_CXXCH_1"/>
</dbReference>
<dbReference type="NCBIfam" id="TIGR03508">
    <property type="entry name" value="decahem_SO"/>
    <property type="match status" value="1"/>
</dbReference>
<dbReference type="NCBIfam" id="TIGR01905">
    <property type="entry name" value="paired_CXXCH_1"/>
    <property type="match status" value="2"/>
</dbReference>
<dbReference type="PANTHER" id="PTHR35038">
    <property type="entry name" value="DISSIMILATORY SULFITE REDUCTASE SIRA"/>
    <property type="match status" value="1"/>
</dbReference>
<dbReference type="PANTHER" id="PTHR35038:SF6">
    <property type="entry name" value="SURFACE LOCALIZED DECAHEME CYTOCHROME C LIPOPROTEIN"/>
    <property type="match status" value="1"/>
</dbReference>
<dbReference type="Pfam" id="PF22678">
    <property type="entry name" value="Cytochrom_c_NrfB-like"/>
    <property type="match status" value="1"/>
</dbReference>
<dbReference type="Pfam" id="PF09699">
    <property type="entry name" value="Paired_CXXCH_1"/>
    <property type="match status" value="2"/>
</dbReference>
<dbReference type="SUPFAM" id="SSF48695">
    <property type="entry name" value="Multiheme cytochromes"/>
    <property type="match status" value="1"/>
</dbReference>
<dbReference type="PROSITE" id="PS51008">
    <property type="entry name" value="MULTIHEME_CYTC"/>
    <property type="match status" value="1"/>
</dbReference>
<name>MTRA_SHEB8</name>
<evidence type="ECO:0000255" key="1"/>
<evidence type="ECO:0000305" key="2"/>
<evidence type="ECO:0007829" key="3">
    <source>
        <dbReference type="PDB" id="6R2Q"/>
    </source>
</evidence>
<sequence>MKNSLKMKNLLPALVITMAMSAVMSLCIAPNAYASKWDAKMTPEQVEATLDKKFAEGNYSPKGADSCLMCHKKSEKVMDLFKGVHGAIDSSKSPMAGLQCEACHGPLGQHNKGGNEPMITFGKQSTLSAEKQNSVCMSCHQDDKRVSWNGSHHDNADVACASCHQVHVAKDPVLSKNTEMEVCTSCHTKQKADMNKRSSHPLKWAQMTCSDCHNPHGSMTDSDLNKPSINETCYSCHAEKRGPKLWEHAPVTENCVTCHNPHGSVNDAMLKTRAPQLCQQCHASDGHASNAYLGNTGLGSNVGDNAFTGGRSCLNCHSQVHGSNHPSGKLLQR</sequence>
<proteinExistence type="evidence at protein level"/>
<organism>
    <name type="scientific">Shewanella baltica (strain OS185)</name>
    <dbReference type="NCBI Taxonomy" id="402882"/>
    <lineage>
        <taxon>Bacteria</taxon>
        <taxon>Pseudomonadati</taxon>
        <taxon>Pseudomonadota</taxon>
        <taxon>Gammaproteobacteria</taxon>
        <taxon>Alteromonadales</taxon>
        <taxon>Shewanellaceae</taxon>
        <taxon>Shewanella</taxon>
    </lineage>
</organism>
<feature type="signal peptide" evidence="1">
    <location>
        <begin position="1"/>
        <end position="34"/>
    </location>
</feature>
<feature type="chain" id="PRO_0000447315" description="Multiheme cytochrome MtrA">
    <location>
        <begin position="35"/>
        <end position="333"/>
    </location>
</feature>
<feature type="helix" evidence="3">
    <location>
        <begin position="67"/>
        <end position="70"/>
    </location>
</feature>
<feature type="strand" evidence="3">
    <location>
        <begin position="89"/>
        <end position="94"/>
    </location>
</feature>
<feature type="turn" evidence="3">
    <location>
        <begin position="95"/>
        <end position="99"/>
    </location>
</feature>
<feature type="helix" evidence="3">
    <location>
        <begin position="100"/>
        <end position="103"/>
    </location>
</feature>
<feature type="strand" evidence="3">
    <location>
        <begin position="107"/>
        <end position="110"/>
    </location>
</feature>
<feature type="strand" evidence="3">
    <location>
        <begin position="125"/>
        <end position="128"/>
    </location>
</feature>
<feature type="helix" evidence="3">
    <location>
        <begin position="134"/>
        <end position="140"/>
    </location>
</feature>
<feature type="strand" evidence="3">
    <location>
        <begin position="143"/>
        <end position="145"/>
    </location>
</feature>
<feature type="helix" evidence="3">
    <location>
        <begin position="148"/>
        <end position="150"/>
    </location>
</feature>
<feature type="helix" evidence="3">
    <location>
        <begin position="154"/>
        <end position="156"/>
    </location>
</feature>
<feature type="helix" evidence="3">
    <location>
        <begin position="160"/>
        <end position="163"/>
    </location>
</feature>
<feature type="strand" evidence="3">
    <location>
        <begin position="167"/>
        <end position="170"/>
    </location>
</feature>
<feature type="helix" evidence="3">
    <location>
        <begin position="172"/>
        <end position="174"/>
    </location>
</feature>
<feature type="turn" evidence="3">
    <location>
        <begin position="176"/>
        <end position="178"/>
    </location>
</feature>
<feature type="helix" evidence="3">
    <location>
        <begin position="179"/>
        <end position="183"/>
    </location>
</feature>
<feature type="turn" evidence="3">
    <location>
        <begin position="184"/>
        <end position="186"/>
    </location>
</feature>
<feature type="helix" evidence="3">
    <location>
        <begin position="188"/>
        <end position="193"/>
    </location>
</feature>
<feature type="strand" evidence="3">
    <location>
        <begin position="196"/>
        <end position="198"/>
    </location>
</feature>
<feature type="turn" evidence="3">
    <location>
        <begin position="202"/>
        <end position="205"/>
    </location>
</feature>
<feature type="helix" evidence="3">
    <location>
        <begin position="209"/>
        <end position="211"/>
    </location>
</feature>
<feature type="strand" evidence="3">
    <location>
        <begin position="224"/>
        <end position="228"/>
    </location>
</feature>
<feature type="helix" evidence="3">
    <location>
        <begin position="229"/>
        <end position="234"/>
    </location>
</feature>
<feature type="helix" evidence="3">
    <location>
        <begin position="238"/>
        <end position="240"/>
    </location>
</feature>
<feature type="helix" evidence="3">
    <location>
        <begin position="249"/>
        <end position="253"/>
    </location>
</feature>
<feature type="helix" evidence="3">
    <location>
        <begin position="255"/>
        <end position="257"/>
    </location>
</feature>
<feature type="strand" evidence="3">
    <location>
        <begin position="264"/>
        <end position="266"/>
    </location>
</feature>
<feature type="helix" evidence="3">
    <location>
        <begin position="267"/>
        <end position="269"/>
    </location>
</feature>
<feature type="strand" evidence="3">
    <location>
        <begin position="270"/>
        <end position="272"/>
    </location>
</feature>
<feature type="helix" evidence="3">
    <location>
        <begin position="274"/>
        <end position="281"/>
    </location>
</feature>
<feature type="strand" evidence="3">
    <location>
        <begin position="284"/>
        <end position="286"/>
    </location>
</feature>
<feature type="strand" evidence="3">
    <location>
        <begin position="297"/>
        <end position="299"/>
    </location>
</feature>
<feature type="turn" evidence="3">
    <location>
        <begin position="306"/>
        <end position="308"/>
    </location>
</feature>
<feature type="helix" evidence="3">
    <location>
        <begin position="312"/>
        <end position="315"/>
    </location>
</feature>
<reference key="1">
    <citation type="submission" date="2007-07" db="EMBL/GenBank/DDBJ databases">
        <title>Complete sequence of chromosome of Shewanella baltica OS185.</title>
        <authorList>
            <consortium name="US DOE Joint Genome Institute"/>
            <person name="Copeland A."/>
            <person name="Lucas S."/>
            <person name="Lapidus A."/>
            <person name="Barry K."/>
            <person name="Glavina del Rio T."/>
            <person name="Dalin E."/>
            <person name="Tice H."/>
            <person name="Pitluck S."/>
            <person name="Sims D."/>
            <person name="Brettin T."/>
            <person name="Bruce D."/>
            <person name="Detter J.C."/>
            <person name="Han C."/>
            <person name="Schmutz J."/>
            <person name="Larimer F."/>
            <person name="Land M."/>
            <person name="Hauser L."/>
            <person name="Kyrpides N."/>
            <person name="Mikhailova N."/>
            <person name="Brettar I."/>
            <person name="Rodrigues J."/>
            <person name="Konstantinidis K."/>
            <person name="Tiedje J."/>
            <person name="Richardson P."/>
        </authorList>
    </citation>
    <scope>NUCLEOTIDE SEQUENCE [LARGE SCALE GENOMIC DNA]</scope>
    <source>
        <strain>OS185</strain>
    </source>
</reference>
<gene>
    <name type="primary">mtrA</name>
    <name type="ordered locus">Shew185_1577</name>
</gene>